<comment type="function">
    <text evidence="1">Together with the chaperonin GroEL, plays an essential role in assisting protein folding. The GroEL-GroES system forms a nano-cage that allows encapsulation of the non-native substrate proteins and provides a physical environment optimized to promote and accelerate protein folding. GroES binds to the apical surface of the GroEL ring, thereby capping the opening of the GroEL channel.</text>
</comment>
<comment type="subunit">
    <text evidence="1">Heptamer of 7 subunits arranged in a ring. Interacts with the chaperonin GroEL.</text>
</comment>
<comment type="subcellular location">
    <subcellularLocation>
        <location evidence="1">Cytoplasm</location>
    </subcellularLocation>
</comment>
<comment type="similarity">
    <text evidence="1">Belongs to the GroES chaperonin family.</text>
</comment>
<sequence>MKIRPLHDRVIVKRKEAESKSAGGIVLTGSAAGKSTRGTVTAVGNGRILDNGSIKPLDVKVGETVIFNEGYGAKIEKIDNEELLILTESDILAIVEE</sequence>
<proteinExistence type="inferred from homology"/>
<feature type="chain" id="PRO_0000174715" description="Co-chaperonin GroES">
    <location>
        <begin position="1"/>
        <end position="97"/>
    </location>
</feature>
<keyword id="KW-0143">Chaperone</keyword>
<keyword id="KW-0963">Cytoplasm</keyword>
<evidence type="ECO:0000255" key="1">
    <source>
        <dbReference type="HAMAP-Rule" id="MF_00580"/>
    </source>
</evidence>
<organism>
    <name type="scientific">Buchnera aphidicola subsp. Geoica urticularia</name>
    <dbReference type="NCBI Taxonomy" id="98801"/>
    <lineage>
        <taxon>Bacteria</taxon>
        <taxon>Pseudomonadati</taxon>
        <taxon>Pseudomonadota</taxon>
        <taxon>Gammaproteobacteria</taxon>
        <taxon>Enterobacterales</taxon>
        <taxon>Erwiniaceae</taxon>
        <taxon>Buchnera</taxon>
    </lineage>
</organism>
<protein>
    <recommendedName>
        <fullName evidence="1">Co-chaperonin GroES</fullName>
    </recommendedName>
    <alternativeName>
        <fullName evidence="1">10 kDa chaperonin</fullName>
    </alternativeName>
    <alternativeName>
        <fullName evidence="1">Chaperonin-10</fullName>
        <shortName evidence="1">Cpn10</shortName>
    </alternativeName>
</protein>
<dbReference type="EMBL" id="AJ401305">
    <property type="protein sequence ID" value="CAC10473.1"/>
    <property type="molecule type" value="Genomic_DNA"/>
</dbReference>
<dbReference type="SMR" id="Q9F4F4"/>
<dbReference type="GO" id="GO:0005737">
    <property type="term" value="C:cytoplasm"/>
    <property type="evidence" value="ECO:0007669"/>
    <property type="project" value="UniProtKB-SubCell"/>
</dbReference>
<dbReference type="GO" id="GO:0005524">
    <property type="term" value="F:ATP binding"/>
    <property type="evidence" value="ECO:0007669"/>
    <property type="project" value="InterPro"/>
</dbReference>
<dbReference type="GO" id="GO:0046872">
    <property type="term" value="F:metal ion binding"/>
    <property type="evidence" value="ECO:0007669"/>
    <property type="project" value="TreeGrafter"/>
</dbReference>
<dbReference type="GO" id="GO:0044183">
    <property type="term" value="F:protein folding chaperone"/>
    <property type="evidence" value="ECO:0007669"/>
    <property type="project" value="InterPro"/>
</dbReference>
<dbReference type="GO" id="GO:0051087">
    <property type="term" value="F:protein-folding chaperone binding"/>
    <property type="evidence" value="ECO:0007669"/>
    <property type="project" value="TreeGrafter"/>
</dbReference>
<dbReference type="GO" id="GO:0051082">
    <property type="term" value="F:unfolded protein binding"/>
    <property type="evidence" value="ECO:0007669"/>
    <property type="project" value="TreeGrafter"/>
</dbReference>
<dbReference type="GO" id="GO:0051085">
    <property type="term" value="P:chaperone cofactor-dependent protein refolding"/>
    <property type="evidence" value="ECO:0007669"/>
    <property type="project" value="TreeGrafter"/>
</dbReference>
<dbReference type="CDD" id="cd00320">
    <property type="entry name" value="cpn10"/>
    <property type="match status" value="1"/>
</dbReference>
<dbReference type="FunFam" id="2.30.33.40:FF:000001">
    <property type="entry name" value="10 kDa chaperonin"/>
    <property type="match status" value="1"/>
</dbReference>
<dbReference type="Gene3D" id="2.30.33.40">
    <property type="entry name" value="GroES chaperonin"/>
    <property type="match status" value="1"/>
</dbReference>
<dbReference type="HAMAP" id="MF_00580">
    <property type="entry name" value="CH10"/>
    <property type="match status" value="1"/>
</dbReference>
<dbReference type="InterPro" id="IPR020818">
    <property type="entry name" value="Chaperonin_GroES"/>
</dbReference>
<dbReference type="InterPro" id="IPR037124">
    <property type="entry name" value="Chaperonin_GroES_sf"/>
</dbReference>
<dbReference type="InterPro" id="IPR018369">
    <property type="entry name" value="Chaprnonin_Cpn10_CS"/>
</dbReference>
<dbReference type="InterPro" id="IPR011032">
    <property type="entry name" value="GroES-like_sf"/>
</dbReference>
<dbReference type="NCBIfam" id="NF001526">
    <property type="entry name" value="PRK00364.1-1"/>
    <property type="match status" value="1"/>
</dbReference>
<dbReference type="NCBIfam" id="NF001527">
    <property type="entry name" value="PRK00364.1-2"/>
    <property type="match status" value="1"/>
</dbReference>
<dbReference type="NCBIfam" id="NF001531">
    <property type="entry name" value="PRK00364.2-2"/>
    <property type="match status" value="1"/>
</dbReference>
<dbReference type="PANTHER" id="PTHR10772">
    <property type="entry name" value="10 KDA HEAT SHOCK PROTEIN"/>
    <property type="match status" value="1"/>
</dbReference>
<dbReference type="PANTHER" id="PTHR10772:SF58">
    <property type="entry name" value="CO-CHAPERONIN GROES"/>
    <property type="match status" value="1"/>
</dbReference>
<dbReference type="Pfam" id="PF00166">
    <property type="entry name" value="Cpn10"/>
    <property type="match status" value="1"/>
</dbReference>
<dbReference type="PRINTS" id="PR00297">
    <property type="entry name" value="CHAPERONIN10"/>
</dbReference>
<dbReference type="SMART" id="SM00883">
    <property type="entry name" value="Cpn10"/>
    <property type="match status" value="1"/>
</dbReference>
<dbReference type="SUPFAM" id="SSF50129">
    <property type="entry name" value="GroES-like"/>
    <property type="match status" value="1"/>
</dbReference>
<dbReference type="PROSITE" id="PS00681">
    <property type="entry name" value="CHAPERONINS_CPN10"/>
    <property type="match status" value="1"/>
</dbReference>
<name>CH10_BUCGU</name>
<accession>Q9F4F4</accession>
<gene>
    <name evidence="1" type="primary">groES</name>
    <name evidence="1" type="synonym">groS</name>
</gene>
<reference key="1">
    <citation type="journal article" date="2000" name="Proc. Natl. Acad. Sci. U.S.A.">
        <title>Post-symbiotic plasmid acquisition and evolution of the repA1-replicon in Buchnera aphidicola.</title>
        <authorList>
            <person name="Van Ham R.C.H.J."/>
            <person name="Gonzalez-Candelas F."/>
            <person name="Silva F.J."/>
            <person name="Sabater B."/>
            <person name="Moya A."/>
            <person name="Latorre A."/>
        </authorList>
    </citation>
    <scope>NUCLEOTIDE SEQUENCE [GENOMIC DNA]</scope>
</reference>